<keyword id="KW-0002">3D-structure</keyword>
<keyword id="KW-0903">Direct protein sequencing</keyword>
<keyword id="KW-0249">Electron transport</keyword>
<keyword id="KW-0472">Membrane</keyword>
<keyword id="KW-0496">Mitochondrion</keyword>
<keyword id="KW-0999">Mitochondrion inner membrane</keyword>
<keyword id="KW-1185">Reference proteome</keyword>
<keyword id="KW-0679">Respiratory chain</keyword>
<keyword id="KW-0812">Transmembrane</keyword>
<keyword id="KW-1133">Transmembrane helix</keyword>
<keyword id="KW-0813">Transport</keyword>
<dbReference type="EMBL" id="X05550">
    <property type="protein sequence ID" value="CAA29065.1"/>
    <property type="molecule type" value="Genomic_DNA"/>
</dbReference>
<dbReference type="EMBL" id="Z49441">
    <property type="protein sequence ID" value="CAA89461.1"/>
    <property type="molecule type" value="Genomic_DNA"/>
</dbReference>
<dbReference type="EMBL" id="AY558554">
    <property type="protein sequence ID" value="AAS56880.1"/>
    <property type="molecule type" value="Genomic_DNA"/>
</dbReference>
<dbReference type="EMBL" id="BK006943">
    <property type="protein sequence ID" value="DAA08637.1"/>
    <property type="molecule type" value="Genomic_DNA"/>
</dbReference>
<dbReference type="PIR" id="S48138">
    <property type="entry name" value="S48138"/>
</dbReference>
<dbReference type="RefSeq" id="NP_012369.1">
    <property type="nucleotide sequence ID" value="NM_001181599.1"/>
</dbReference>
<dbReference type="PDB" id="1EZV">
    <property type="method" value="X-ray"/>
    <property type="resolution" value="2.30 A"/>
    <property type="chains" value="G=2-94"/>
</dbReference>
<dbReference type="PDB" id="1KB9">
    <property type="method" value="X-ray"/>
    <property type="resolution" value="2.30 A"/>
    <property type="chains" value="H=2-94"/>
</dbReference>
<dbReference type="PDB" id="1KYO">
    <property type="method" value="X-ray"/>
    <property type="resolution" value="2.97 A"/>
    <property type="chains" value="H/S=2-94"/>
</dbReference>
<dbReference type="PDB" id="1P84">
    <property type="method" value="X-ray"/>
    <property type="resolution" value="2.50 A"/>
    <property type="chains" value="H=2-94"/>
</dbReference>
<dbReference type="PDB" id="2IBZ">
    <property type="method" value="X-ray"/>
    <property type="resolution" value="2.30 A"/>
    <property type="chains" value="G=1-94"/>
</dbReference>
<dbReference type="PDB" id="3CX5">
    <property type="method" value="X-ray"/>
    <property type="resolution" value="1.90 A"/>
    <property type="chains" value="H/S=2-94"/>
</dbReference>
<dbReference type="PDB" id="3CXH">
    <property type="method" value="X-ray"/>
    <property type="resolution" value="2.50 A"/>
    <property type="chains" value="H/S=2-94"/>
</dbReference>
<dbReference type="PDB" id="4PD4">
    <property type="method" value="X-ray"/>
    <property type="resolution" value="3.04 A"/>
    <property type="chains" value="H=2-94"/>
</dbReference>
<dbReference type="PDB" id="6GIQ">
    <property type="method" value="EM"/>
    <property type="resolution" value="3.23 A"/>
    <property type="chains" value="H/S=1-94"/>
</dbReference>
<dbReference type="PDB" id="6HU9">
    <property type="method" value="EM"/>
    <property type="resolution" value="3.35 A"/>
    <property type="chains" value="H/S=2-94"/>
</dbReference>
<dbReference type="PDB" id="6T0B">
    <property type="method" value="EM"/>
    <property type="resolution" value="2.80 A"/>
    <property type="chains" value="H/S=1-94"/>
</dbReference>
<dbReference type="PDB" id="6T15">
    <property type="method" value="EM"/>
    <property type="resolution" value="3.29 A"/>
    <property type="chains" value="H/S=1-94"/>
</dbReference>
<dbReference type="PDB" id="6YMX">
    <property type="method" value="EM"/>
    <property type="resolution" value="3.17 A"/>
    <property type="chains" value="H/S=2-94"/>
</dbReference>
<dbReference type="PDB" id="8E7S">
    <property type="method" value="EM"/>
    <property type="resolution" value="3.20 A"/>
    <property type="chains" value="H/h=1-94"/>
</dbReference>
<dbReference type="PDB" id="8EC0">
    <property type="method" value="EM"/>
    <property type="resolution" value="3.30 A"/>
    <property type="chains" value="H/h=1-94"/>
</dbReference>
<dbReference type="PDB" id="8YHQ">
    <property type="method" value="EM"/>
    <property type="resolution" value="2.42 A"/>
    <property type="chains" value="H/Q=2-94"/>
</dbReference>
<dbReference type="PDB" id="8YIN">
    <property type="method" value="EM"/>
    <property type="resolution" value="2.74 A"/>
    <property type="chains" value="H/S=2-94"/>
</dbReference>
<dbReference type="PDB" id="8ZMT">
    <property type="method" value="EM"/>
    <property type="resolution" value="2.52 A"/>
    <property type="chains" value="H/S=2-94"/>
</dbReference>
<dbReference type="PDB" id="9ETZ">
    <property type="method" value="EM"/>
    <property type="resolution" value="2.40 A"/>
    <property type="chains" value="H/S=2-94"/>
</dbReference>
<dbReference type="PDBsum" id="1EZV"/>
<dbReference type="PDBsum" id="1KB9"/>
<dbReference type="PDBsum" id="1KYO"/>
<dbReference type="PDBsum" id="1P84"/>
<dbReference type="PDBsum" id="2IBZ"/>
<dbReference type="PDBsum" id="3CX5"/>
<dbReference type="PDBsum" id="3CXH"/>
<dbReference type="PDBsum" id="4PD4"/>
<dbReference type="PDBsum" id="6GIQ"/>
<dbReference type="PDBsum" id="6HU9"/>
<dbReference type="PDBsum" id="6T0B"/>
<dbReference type="PDBsum" id="6T15"/>
<dbReference type="PDBsum" id="6YMX"/>
<dbReference type="PDBsum" id="8E7S"/>
<dbReference type="PDBsum" id="8EC0"/>
<dbReference type="PDBsum" id="8YHQ"/>
<dbReference type="PDBsum" id="8YIN"/>
<dbReference type="PDBsum" id="8ZMT"/>
<dbReference type="PDBsum" id="9ETZ"/>
<dbReference type="EMDB" id="EMD-10317"/>
<dbReference type="EMDB" id="EMD-10340"/>
<dbReference type="EMDB" id="EMD-19963"/>
<dbReference type="EMDB" id="EMD-27940"/>
<dbReference type="EMDB" id="EMD-28011"/>
<dbReference type="SMR" id="P08525"/>
<dbReference type="BioGRID" id="33593">
    <property type="interactions" value="347"/>
</dbReference>
<dbReference type="ComplexPortal" id="CPX-567">
    <property type="entry name" value="Mitochondrial respiratory chain complex III"/>
</dbReference>
<dbReference type="DIP" id="DIP-4706N"/>
<dbReference type="FunCoup" id="P08525">
    <property type="interactions" value="151"/>
</dbReference>
<dbReference type="IntAct" id="P08525">
    <property type="interactions" value="35"/>
</dbReference>
<dbReference type="MINT" id="P08525"/>
<dbReference type="STRING" id="4932.YJL166W"/>
<dbReference type="PaxDb" id="4932-YJL166W"/>
<dbReference type="PeptideAtlas" id="P08525"/>
<dbReference type="TopDownProteomics" id="P08525"/>
<dbReference type="EnsemblFungi" id="YJL166W_mRNA">
    <property type="protein sequence ID" value="YJL166W"/>
    <property type="gene ID" value="YJL166W"/>
</dbReference>
<dbReference type="GeneID" id="853273"/>
<dbReference type="KEGG" id="sce:YJL166W"/>
<dbReference type="AGR" id="SGD:S000003702"/>
<dbReference type="SGD" id="S000003702">
    <property type="gene designation" value="QCR8"/>
</dbReference>
<dbReference type="VEuPathDB" id="FungiDB:YJL166W"/>
<dbReference type="eggNOG" id="KOG4116">
    <property type="taxonomic scope" value="Eukaryota"/>
</dbReference>
<dbReference type="GeneTree" id="ENSGT00390000004029"/>
<dbReference type="HOGENOM" id="CLU_156007_0_1_1"/>
<dbReference type="InParanoid" id="P08525"/>
<dbReference type="OMA" id="AGIYWYW"/>
<dbReference type="OrthoDB" id="6683853at2759"/>
<dbReference type="BioCyc" id="MetaCyc:YJL166W-MONOMER"/>
<dbReference type="BioCyc" id="YEAST:YJL166W-MONOMER"/>
<dbReference type="Reactome" id="R-SCE-611105">
    <property type="pathway name" value="Respiratory electron transport"/>
</dbReference>
<dbReference type="Reactome" id="R-SCE-9837999">
    <property type="pathway name" value="Mitochondrial protein degradation"/>
</dbReference>
<dbReference type="Reactome" id="R-SCE-9865878">
    <property type="pathway name" value="Complex III assembly"/>
</dbReference>
<dbReference type="BioGRID-ORCS" id="853273">
    <property type="hits" value="10 hits in 10 CRISPR screens"/>
</dbReference>
<dbReference type="EvolutionaryTrace" id="P08525"/>
<dbReference type="PRO" id="PR:P08525"/>
<dbReference type="Proteomes" id="UP000002311">
    <property type="component" value="Chromosome X"/>
</dbReference>
<dbReference type="RNAct" id="P08525">
    <property type="molecule type" value="protein"/>
</dbReference>
<dbReference type="GO" id="GO:0005743">
    <property type="term" value="C:mitochondrial inner membrane"/>
    <property type="evidence" value="ECO:0000314"/>
    <property type="project" value="ComplexPortal"/>
</dbReference>
<dbReference type="GO" id="GO:0005739">
    <property type="term" value="C:mitochondrion"/>
    <property type="evidence" value="ECO:0007005"/>
    <property type="project" value="SGD"/>
</dbReference>
<dbReference type="GO" id="GO:0045275">
    <property type="term" value="C:respiratory chain complex III"/>
    <property type="evidence" value="ECO:0000314"/>
    <property type="project" value="SGD"/>
</dbReference>
<dbReference type="GO" id="GO:0008121">
    <property type="term" value="F:ubiquinol-cytochrome-c reductase activity"/>
    <property type="evidence" value="ECO:0000315"/>
    <property type="project" value="SGD"/>
</dbReference>
<dbReference type="GO" id="GO:0009060">
    <property type="term" value="P:aerobic respiration"/>
    <property type="evidence" value="ECO:0000315"/>
    <property type="project" value="SGD"/>
</dbReference>
<dbReference type="GO" id="GO:0045333">
    <property type="term" value="P:cellular respiration"/>
    <property type="evidence" value="ECO:0000314"/>
    <property type="project" value="ComplexPortal"/>
</dbReference>
<dbReference type="GO" id="GO:0006122">
    <property type="term" value="P:mitochondrial electron transport, ubiquinol to cytochrome c"/>
    <property type="evidence" value="ECO:0000314"/>
    <property type="project" value="ComplexPortal"/>
</dbReference>
<dbReference type="FunFam" id="1.20.5.210:FF:000001">
    <property type="entry name" value="Cytochrome b-c1 complex subunit 8"/>
    <property type="match status" value="1"/>
</dbReference>
<dbReference type="Gene3D" id="1.20.5.210">
    <property type="entry name" value="Cytochrome b-c1 complex subunit 8"/>
    <property type="match status" value="1"/>
</dbReference>
<dbReference type="InterPro" id="IPR004205">
    <property type="entry name" value="Cyt_bc1_su8"/>
</dbReference>
<dbReference type="InterPro" id="IPR036642">
    <property type="entry name" value="Cyt_bc1_su8_sf"/>
</dbReference>
<dbReference type="PANTHER" id="PTHR12119:SF2">
    <property type="entry name" value="CYTOCHROME B-C1 COMPLEX SUBUNIT 8"/>
    <property type="match status" value="1"/>
</dbReference>
<dbReference type="PANTHER" id="PTHR12119">
    <property type="entry name" value="UBIQUINOL-CYTOCHROME C REDUCTASE COMPLEX UBIQUINONE-BINDING PROTEIN QP-C"/>
    <property type="match status" value="1"/>
</dbReference>
<dbReference type="Pfam" id="PF02939">
    <property type="entry name" value="UcrQ"/>
    <property type="match status" value="1"/>
</dbReference>
<dbReference type="SUPFAM" id="SSF81508">
    <property type="entry name" value="Ubiquinone-binding protein QP-C of cytochrome bc1 complex (Ubiquinol-cytochrome c reductase)"/>
    <property type="match status" value="1"/>
</dbReference>
<protein>
    <recommendedName>
        <fullName>Cytochrome b-c1 complex subunit 8, mitochondrial</fullName>
    </recommendedName>
    <alternativeName>
        <fullName>Complex III subunit 8</fullName>
    </alternativeName>
    <alternativeName>
        <fullName>Complex III subunit VII</fullName>
    </alternativeName>
    <alternativeName>
        <fullName>Ubiquinol-cytochrome c oxidoreductase subunit 8</fullName>
    </alternativeName>
    <alternativeName>
        <fullName>Ubiquinol-cytochrome c reductase complex 11 kDa protein</fullName>
    </alternativeName>
    <alternativeName>
        <fullName>Ubiquinone-binding protein QP-C</fullName>
    </alternativeName>
</protein>
<accession>P08525</accession>
<accession>D6VW21</accession>
<sequence length="94" mass="10975">MGPPSGKTYMGWWGHMGGPKQKGITSYAVSPYAQKPLQGIFHNAVFNSFRRFKSQFLYVLIPAGIYWYWWKNGNEYNEFLYSKAGREELERVNV</sequence>
<reference key="1">
    <citation type="journal article" date="1987" name="Eur. J. Biochem.">
        <title>Nucleotide sequence of the gene encoding the 11-kDa subunit of the ubiquinol-cytochrome-c oxidoreductase in Saccharomyces cerevisiae.</title>
        <authorList>
            <person name="Maarse A.C."/>
            <person name="Grivell L.A."/>
        </authorList>
    </citation>
    <scope>NUCLEOTIDE SEQUENCE [GENOMIC DNA]</scope>
    <scope>PROTEIN SEQUENCE OF 2-11</scope>
</reference>
<reference key="2">
    <citation type="journal article" date="1993" name="Eur. J. Biochem.">
        <title>A region of the C-terminal part of the 11-kDa subunit of ubiquinol-cytochrome-c oxidoreductase of the yeast Saccharomyces cerevisiae contributes to the structure of the Qout reaction domain.</title>
        <authorList>
            <person name="Hemrika W."/>
            <person name="Berden J.A."/>
            <person name="Grivell L.A."/>
        </authorList>
    </citation>
    <scope>NUCLEOTIDE SEQUENCE [GENOMIC DNA]</scope>
</reference>
<reference key="3">
    <citation type="journal article" date="1996" name="EMBO J.">
        <title>Complete nucleotide sequence of Saccharomyces cerevisiae chromosome X.</title>
        <authorList>
            <person name="Galibert F."/>
            <person name="Alexandraki D."/>
            <person name="Baur A."/>
            <person name="Boles E."/>
            <person name="Chalwatzis N."/>
            <person name="Chuat J.-C."/>
            <person name="Coster F."/>
            <person name="Cziepluch C."/>
            <person name="de Haan M."/>
            <person name="Domdey H."/>
            <person name="Durand P."/>
            <person name="Entian K.-D."/>
            <person name="Gatius M."/>
            <person name="Goffeau A."/>
            <person name="Grivell L.A."/>
            <person name="Hennemann A."/>
            <person name="Herbert C.J."/>
            <person name="Heumann K."/>
            <person name="Hilger F."/>
            <person name="Hollenberg C.P."/>
            <person name="Huang M.-E."/>
            <person name="Jacq C."/>
            <person name="Jauniaux J.-C."/>
            <person name="Katsoulou C."/>
            <person name="Kirchrath L."/>
            <person name="Kleine K."/>
            <person name="Kordes E."/>
            <person name="Koetter P."/>
            <person name="Liebl S."/>
            <person name="Louis E.J."/>
            <person name="Manus V."/>
            <person name="Mewes H.-W."/>
            <person name="Miosga T."/>
            <person name="Obermaier B."/>
            <person name="Perea J."/>
            <person name="Pohl T.M."/>
            <person name="Portetelle D."/>
            <person name="Pujol A."/>
            <person name="Purnelle B."/>
            <person name="Ramezani Rad M."/>
            <person name="Rasmussen S.W."/>
            <person name="Rose M."/>
            <person name="Rossau R."/>
            <person name="Schaaff-Gerstenschlaeger I."/>
            <person name="Smits P.H.M."/>
            <person name="Scarcez T."/>
            <person name="Soriano N."/>
            <person name="To Van D."/>
            <person name="Tzermia M."/>
            <person name="Van Broekhoven A."/>
            <person name="Vandenbol M."/>
            <person name="Wedler H."/>
            <person name="von Wettstein D."/>
            <person name="Wambutt R."/>
            <person name="Zagulski M."/>
            <person name="Zollner A."/>
            <person name="Karpfinger-Hartl L."/>
        </authorList>
    </citation>
    <scope>NUCLEOTIDE SEQUENCE [LARGE SCALE GENOMIC DNA]</scope>
    <source>
        <strain>ATCC 204508 / S288c</strain>
    </source>
</reference>
<reference key="4">
    <citation type="journal article" date="2014" name="G3 (Bethesda)">
        <title>The reference genome sequence of Saccharomyces cerevisiae: Then and now.</title>
        <authorList>
            <person name="Engel S.R."/>
            <person name="Dietrich F.S."/>
            <person name="Fisk D.G."/>
            <person name="Binkley G."/>
            <person name="Balakrishnan R."/>
            <person name="Costanzo M.C."/>
            <person name="Dwight S.S."/>
            <person name="Hitz B.C."/>
            <person name="Karra K."/>
            <person name="Nash R.S."/>
            <person name="Weng S."/>
            <person name="Wong E.D."/>
            <person name="Lloyd P."/>
            <person name="Skrzypek M.S."/>
            <person name="Miyasato S.R."/>
            <person name="Simison M."/>
            <person name="Cherry J.M."/>
        </authorList>
    </citation>
    <scope>GENOME REANNOTATION</scope>
    <source>
        <strain>ATCC 204508 / S288c</strain>
    </source>
</reference>
<reference key="5">
    <citation type="journal article" date="2007" name="Genome Res.">
        <title>Approaching a complete repository of sequence-verified protein-encoding clones for Saccharomyces cerevisiae.</title>
        <authorList>
            <person name="Hu Y."/>
            <person name="Rolfs A."/>
            <person name="Bhullar B."/>
            <person name="Murthy T.V.S."/>
            <person name="Zhu C."/>
            <person name="Berger M.F."/>
            <person name="Camargo A.A."/>
            <person name="Kelley F."/>
            <person name="McCarron S."/>
            <person name="Jepson D."/>
            <person name="Richardson A."/>
            <person name="Raphael J."/>
            <person name="Moreira D."/>
            <person name="Taycher E."/>
            <person name="Zuo D."/>
            <person name="Mohr S."/>
            <person name="Kane M.F."/>
            <person name="Williamson J."/>
            <person name="Simpson A.J.G."/>
            <person name="Bulyk M.L."/>
            <person name="Harlow E."/>
            <person name="Marsischky G."/>
            <person name="Kolodner R.D."/>
            <person name="LaBaer J."/>
        </authorList>
    </citation>
    <scope>NUCLEOTIDE SEQUENCE [GENOMIC DNA]</scope>
    <source>
        <strain>ATCC 204508 / S288c</strain>
    </source>
</reference>
<reference key="6">
    <citation type="journal article" date="2000" name="EMBO J.">
        <title>Supercomplexes in the respiratory chains of yeast and mammalian mitochondria.</title>
        <authorList>
            <person name="Schaegger H."/>
            <person name="Pfeiffer K."/>
        </authorList>
    </citation>
    <scope>FORMATION OF CYTOCHROME BC1-CYTOCHROME C OXIDASE SUPERCOMPLEX</scope>
</reference>
<reference key="7">
    <citation type="journal article" date="2000" name="J. Biol. Chem.">
        <title>The cytochrome bc1 and cytochrome c oxidase complexes associate to form a single supracomplex in yeast mitochondria.</title>
        <authorList>
            <person name="Cruciat C.M."/>
            <person name="Brunner S."/>
            <person name="Baumann F."/>
            <person name="Neupert W."/>
            <person name="Stuart R.A."/>
        </authorList>
    </citation>
    <scope>FORMATION OF CYTOCHROME BC1-CYTOCHROME C OXIDASE SUPERCOMPLEX</scope>
</reference>
<reference key="8">
    <citation type="journal article" date="2003" name="Nature">
        <title>Global analysis of protein expression in yeast.</title>
        <authorList>
            <person name="Ghaemmaghami S."/>
            <person name="Huh W.-K."/>
            <person name="Bower K."/>
            <person name="Howson R.W."/>
            <person name="Belle A."/>
            <person name="Dephoure N."/>
            <person name="O'Shea E.K."/>
            <person name="Weissman J.S."/>
        </authorList>
    </citation>
    <scope>LEVEL OF PROTEIN EXPRESSION [LARGE SCALE ANALYSIS]</scope>
</reference>
<reference key="9">
    <citation type="journal article" date="2000" name="Structure">
        <title>Structure at 2.3 A resolution of the cytochrome bc1 complex from the yeast Saccharomyces cerevisiae co-crystallized with an antibody Fv fragment.</title>
        <authorList>
            <person name="Hunte C."/>
            <person name="Koepke J."/>
            <person name="Lange C."/>
            <person name="Rossmanith T."/>
            <person name="Michel H."/>
        </authorList>
    </citation>
    <scope>X-RAY CRYSTALLOGRAPHY (2.3 ANGSTROMS)</scope>
</reference>
<reference key="10">
    <citation type="journal article" date="2002" name="Proc. Natl. Acad. Sci. U.S.A.">
        <title>Crystal structure of the yeast cytochrome bc1 complex with its bound substrate cytochrome c.</title>
        <authorList>
            <person name="Lange C."/>
            <person name="Hunte C."/>
        </authorList>
    </citation>
    <scope>X-RAY CRYSTALLOGRAPHY (2.97 ANGSTROMS)</scope>
</reference>
<reference key="11">
    <citation type="journal article" date="2008" name="J. Biol. Chem.">
        <title>Structure of complex III with bound cytochrome c in reduced state and definition of a minimal core interface for electron transfer.</title>
        <authorList>
            <person name="Solmaz S.R."/>
            <person name="Hunte C."/>
        </authorList>
    </citation>
    <scope>X-RAY CRYSTALLOGRAPHY (1.90 ANGSTROMS) OF 2-94</scope>
</reference>
<reference key="12">
    <citation type="journal article" date="2019" name="Nat. Struct. Mol. Biol.">
        <title>Cryo-EM structure of the yeast respiratory supercomplex.</title>
        <authorList>
            <person name="Rathore S."/>
            <person name="Berndtsson J."/>
            <person name="Marin-Buera L."/>
            <person name="Conrad J."/>
            <person name="Carroni M."/>
            <person name="Brzezinski P."/>
            <person name="Ott M."/>
        </authorList>
    </citation>
    <scope>STRUCTURE BY ELECTRON MICROSCOPY (3.23 ANGSTROMS)</scope>
</reference>
<reference key="13">
    <citation type="journal article" date="2019" name="Nat. Struct. Mol. Biol.">
        <title>Structure of yeast cytochrome c oxidase in a supercomplex with cytochrome bc1.</title>
        <authorList>
            <person name="Hartley A.M."/>
            <person name="Lukoyanova N."/>
            <person name="Zhang Y."/>
            <person name="Cabrera-Orefice A."/>
            <person name="Arnold S."/>
            <person name="Meunier B."/>
            <person name="Pinotsis N."/>
            <person name="Marechal A."/>
        </authorList>
    </citation>
    <scope>STRUCTURE BY ELECTRON MICROSCOPY (3.35 ANGSTROMS)</scope>
</reference>
<organism>
    <name type="scientific">Saccharomyces cerevisiae (strain ATCC 204508 / S288c)</name>
    <name type="common">Baker's yeast</name>
    <dbReference type="NCBI Taxonomy" id="559292"/>
    <lineage>
        <taxon>Eukaryota</taxon>
        <taxon>Fungi</taxon>
        <taxon>Dikarya</taxon>
        <taxon>Ascomycota</taxon>
        <taxon>Saccharomycotina</taxon>
        <taxon>Saccharomycetes</taxon>
        <taxon>Saccharomycetales</taxon>
        <taxon>Saccharomycetaceae</taxon>
        <taxon>Saccharomyces</taxon>
    </lineage>
</organism>
<proteinExistence type="evidence at protein level"/>
<name>QCR8_YEAST</name>
<evidence type="ECO:0000269" key="1">
    <source>
    </source>
</evidence>
<evidence type="ECO:0000269" key="2">
    <source>
    </source>
</evidence>
<evidence type="ECO:0000269" key="3">
    <source>
    </source>
</evidence>
<evidence type="ECO:0000269" key="4">
    <source>
    </source>
</evidence>
<evidence type="ECO:0000269" key="5">
    <source>
    </source>
</evidence>
<evidence type="ECO:0000269" key="6">
    <source>
    </source>
</evidence>
<evidence type="ECO:0000269" key="7">
    <source>
    </source>
</evidence>
<evidence type="ECO:0000269" key="8">
    <source>
    </source>
</evidence>
<evidence type="ECO:0000305" key="9"/>
<evidence type="ECO:0000305" key="10">
    <source>
    </source>
</evidence>
<evidence type="ECO:0000305" key="11">
    <source>
    </source>
</evidence>
<evidence type="ECO:0007829" key="12">
    <source>
        <dbReference type="PDB" id="3CX5"/>
    </source>
</evidence>
<evidence type="ECO:0007829" key="13">
    <source>
        <dbReference type="PDB" id="9ETZ"/>
    </source>
</evidence>
<comment type="function">
    <text evidence="10">Component of the ubiquinol-cytochrome c oxidoreductase, a multisubunit transmembrane complex that is part of the mitochondrial electron transport chain which drives oxidative phosphorylation. The respiratory chain contains 3 multisubunit complexes succinate dehydrogenase (complex II, CII), ubiquinol-cytochrome c oxidoreductase (cytochrome b-c1 complex, complex III, CIII) and cytochrome c oxidase (complex IV, CIV), that cooperate to transfer electrons derived from NADH and succinate to molecular oxygen, creating an electrochemical gradient over the inner membrane that drives transmembrane transport and the ATP synthase. The cytochrome b-c1 complex catalyzes electron transfer from ubiquinol to cytochrome c, linking this redox reaction to translocation of protons across the mitochondrial inner membrane, with protons being carried across the membrane as hydrogens on the quinol. In the process called Q cycle, 2 protons are consumed from the matrix, 4 protons are released into the intermembrane space and 2 electrons are passed to cytochrome c.</text>
</comment>
<comment type="subunit">
    <text evidence="1 2 3 4 6 7 8">Component of the ubiquinol-cytochrome c oxidoreductase (cytochrome b-c1 complex, complex III, CIII), a multisubunit enzyme composed of 10 subunits. The complex is composed of 3 respiratory subunits cytochrome b (COB), cytochrome c1 (CYT1) and Rieske protein (RIP1), 2 core protein subunits COR1 and QCR2, and 5 low-molecular weight protein subunits QCR6, QCR7, QCR8, QCR9 and QCR10 (PubMed:10873857, PubMed:11880631, PubMed:18390544, PubMed:30598554). The complex exists as an obligatory dimer and forms supercomplexes (SCs) in the inner mitochondrial membrane with a monomer or a dimer of cytochrome c oxidase (complex IV, CIV), resulting in 2 different assemblies (supercomplexes III(2)IV and III(2)IV(2)) (PubMed:10764779, PubMed:10775262, PubMed:30598554, PubMed:30598556).</text>
</comment>
<comment type="subcellular location">
    <subcellularLocation>
        <location evidence="6 7">Mitochondrion inner membrane</location>
        <topology evidence="6 7">Single-pass membrane protein</topology>
    </subcellularLocation>
</comment>
<comment type="miscellaneous">
    <text evidence="5">Present with 6140 molecules/cell in log phase SD medium.</text>
</comment>
<comment type="similarity">
    <text evidence="9">Belongs to the UQCRQ/QCR8 family.</text>
</comment>
<feature type="initiator methionine" description="Removed" evidence="11">
    <location>
        <position position="1"/>
    </location>
</feature>
<feature type="chain" id="PRO_0000193551" description="Cytochrome b-c1 complex subunit 8, mitochondrial">
    <location>
        <begin position="2"/>
        <end position="94"/>
    </location>
</feature>
<feature type="topological domain" description="Mitochondrial matrix" evidence="6 7">
    <location>
        <begin position="2"/>
        <end position="49"/>
    </location>
</feature>
<feature type="transmembrane region" description="Helical" evidence="6 7">
    <location>
        <begin position="50"/>
        <end position="80"/>
    </location>
</feature>
<feature type="topological domain" description="Mitochondrial intermembrane" evidence="6 7">
    <location>
        <begin position="81"/>
        <end position="94"/>
    </location>
</feature>
<feature type="strand" evidence="12">
    <location>
        <begin position="23"/>
        <end position="29"/>
    </location>
</feature>
<feature type="helix" evidence="12">
    <location>
        <begin position="31"/>
        <end position="33"/>
    </location>
</feature>
<feature type="turn" evidence="13">
    <location>
        <begin position="36"/>
        <end position="39"/>
    </location>
</feature>
<feature type="turn" evidence="12">
    <location>
        <begin position="41"/>
        <end position="44"/>
    </location>
</feature>
<feature type="strand" evidence="12">
    <location>
        <begin position="45"/>
        <end position="47"/>
    </location>
</feature>
<feature type="helix" evidence="12">
    <location>
        <begin position="50"/>
        <end position="53"/>
    </location>
</feature>
<feature type="helix" evidence="12">
    <location>
        <begin position="56"/>
        <end position="80"/>
    </location>
</feature>
<feature type="helix" evidence="12">
    <location>
        <begin position="83"/>
        <end position="85"/>
    </location>
</feature>
<feature type="helix" evidence="12">
    <location>
        <begin position="86"/>
        <end position="93"/>
    </location>
</feature>
<gene>
    <name type="primary">QCR8</name>
    <name type="ordered locus">YJL166W</name>
    <name type="ORF">J0526</name>
</gene>